<feature type="chain" id="PRO_0000213430" description="Microtubule-associated protein RP/EB family member 3">
    <location>
        <begin position="1"/>
        <end position="281"/>
    </location>
</feature>
<feature type="domain" description="Calponin-homology (CH)" evidence="4">
    <location>
        <begin position="14"/>
        <end position="116"/>
    </location>
</feature>
<feature type="domain" description="EB1 C-terminal" evidence="5">
    <location>
        <begin position="194"/>
        <end position="264"/>
    </location>
</feature>
<feature type="region of interest" description="Disordered" evidence="6">
    <location>
        <begin position="157"/>
        <end position="181"/>
    </location>
</feature>
<feature type="region of interest" description="DCTN1-binding" evidence="1">
    <location>
        <begin position="217"/>
        <end position="281"/>
    </location>
</feature>
<feature type="region of interest" description="APC-binding" evidence="1">
    <location>
        <begin position="217"/>
        <end position="260"/>
    </location>
</feature>
<feature type="region of interest" description="Disordered" evidence="6">
    <location>
        <begin position="260"/>
        <end position="281"/>
    </location>
</feature>
<feature type="compositionally biased region" description="Polar residues" evidence="6">
    <location>
        <begin position="158"/>
        <end position="175"/>
    </location>
</feature>
<feature type="compositionally biased region" description="Basic and acidic residues" evidence="6">
    <location>
        <begin position="272"/>
        <end position="281"/>
    </location>
</feature>
<feature type="modified residue" description="Phosphoserine" evidence="9">
    <location>
        <position position="162"/>
    </location>
</feature>
<feature type="modified residue" description="Phosphoserine" evidence="2">
    <location>
        <position position="176"/>
    </location>
</feature>
<accession>Q5XIT1</accession>
<name>MARE3_RAT</name>
<organism>
    <name type="scientific">Rattus norvegicus</name>
    <name type="common">Rat</name>
    <dbReference type="NCBI Taxonomy" id="10116"/>
    <lineage>
        <taxon>Eukaryota</taxon>
        <taxon>Metazoa</taxon>
        <taxon>Chordata</taxon>
        <taxon>Craniata</taxon>
        <taxon>Vertebrata</taxon>
        <taxon>Euteleostomi</taxon>
        <taxon>Mammalia</taxon>
        <taxon>Eutheria</taxon>
        <taxon>Euarchontoglires</taxon>
        <taxon>Glires</taxon>
        <taxon>Rodentia</taxon>
        <taxon>Myomorpha</taxon>
        <taxon>Muroidea</taxon>
        <taxon>Muridae</taxon>
        <taxon>Murinae</taxon>
        <taxon>Rattus</taxon>
    </lineage>
</organism>
<dbReference type="EMBL" id="BC083589">
    <property type="protein sequence ID" value="AAH83589.1"/>
    <property type="molecule type" value="mRNA"/>
</dbReference>
<dbReference type="RefSeq" id="NP_001007657.1">
    <property type="nucleotide sequence ID" value="NM_001007656.1"/>
</dbReference>
<dbReference type="RefSeq" id="XP_008762734.1">
    <property type="nucleotide sequence ID" value="XM_008764512.4"/>
</dbReference>
<dbReference type="RefSeq" id="XP_038967842.1">
    <property type="nucleotide sequence ID" value="XM_039111914.2"/>
</dbReference>
<dbReference type="BMRB" id="Q5XIT1"/>
<dbReference type="SMR" id="Q5XIT1"/>
<dbReference type="BioGRID" id="256035">
    <property type="interactions" value="2"/>
</dbReference>
<dbReference type="FunCoup" id="Q5XIT1">
    <property type="interactions" value="1456"/>
</dbReference>
<dbReference type="IntAct" id="Q5XIT1">
    <property type="interactions" value="1"/>
</dbReference>
<dbReference type="STRING" id="10116.ENSRNOP00000011877"/>
<dbReference type="iPTMnet" id="Q5XIT1"/>
<dbReference type="PhosphoSitePlus" id="Q5XIT1"/>
<dbReference type="jPOST" id="Q5XIT1"/>
<dbReference type="PaxDb" id="10116-ENSRNOP00000011877"/>
<dbReference type="Ensembl" id="ENSRNOT00000011874.5">
    <property type="protein sequence ID" value="ENSRNOP00000011877.2"/>
    <property type="gene ID" value="ENSRNOG00000008961.5"/>
</dbReference>
<dbReference type="GeneID" id="298848"/>
<dbReference type="KEGG" id="rno:298848"/>
<dbReference type="AGR" id="RGD:1359297"/>
<dbReference type="CTD" id="22924"/>
<dbReference type="RGD" id="1359297">
    <property type="gene designation" value="Mapre3"/>
</dbReference>
<dbReference type="eggNOG" id="KOG3000">
    <property type="taxonomic scope" value="Eukaryota"/>
</dbReference>
<dbReference type="GeneTree" id="ENSGT00490000043329"/>
<dbReference type="HOGENOM" id="CLU_041744_1_0_1"/>
<dbReference type="InParanoid" id="Q5XIT1"/>
<dbReference type="OMA" id="HTHWIKH"/>
<dbReference type="OrthoDB" id="2119228at2759"/>
<dbReference type="PhylomeDB" id="Q5XIT1"/>
<dbReference type="TreeFam" id="TF313620"/>
<dbReference type="PRO" id="PR:Q5XIT1"/>
<dbReference type="Proteomes" id="UP000002494">
    <property type="component" value="Chromosome 6"/>
</dbReference>
<dbReference type="Bgee" id="ENSRNOG00000008961">
    <property type="expression patterns" value="Expressed in frontal cortex and 20 other cell types or tissues"/>
</dbReference>
<dbReference type="GO" id="GO:0005737">
    <property type="term" value="C:cytoplasm"/>
    <property type="evidence" value="ECO:0000266"/>
    <property type="project" value="RGD"/>
</dbReference>
<dbReference type="GO" id="GO:0005881">
    <property type="term" value="C:cytoplasmic microtubule"/>
    <property type="evidence" value="ECO:0000318"/>
    <property type="project" value="GO_Central"/>
</dbReference>
<dbReference type="GO" id="GO:0005874">
    <property type="term" value="C:microtubule"/>
    <property type="evidence" value="ECO:0000266"/>
    <property type="project" value="RGD"/>
</dbReference>
<dbReference type="GO" id="GO:0015630">
    <property type="term" value="C:microtubule cytoskeleton"/>
    <property type="evidence" value="ECO:0000266"/>
    <property type="project" value="RGD"/>
</dbReference>
<dbReference type="GO" id="GO:0005815">
    <property type="term" value="C:microtubule organizing center"/>
    <property type="evidence" value="ECO:0000318"/>
    <property type="project" value="GO_Central"/>
</dbReference>
<dbReference type="GO" id="GO:0035371">
    <property type="term" value="C:microtubule plus-end"/>
    <property type="evidence" value="ECO:0000266"/>
    <property type="project" value="RGD"/>
</dbReference>
<dbReference type="GO" id="GO:0030496">
    <property type="term" value="C:midbody"/>
    <property type="evidence" value="ECO:0000266"/>
    <property type="project" value="RGD"/>
</dbReference>
<dbReference type="GO" id="GO:1905721">
    <property type="term" value="C:mitotic spindle astral microtubule end"/>
    <property type="evidence" value="ECO:0000266"/>
    <property type="project" value="RGD"/>
</dbReference>
<dbReference type="GO" id="GO:0098984">
    <property type="term" value="C:neuron to neuron synapse"/>
    <property type="evidence" value="ECO:0000314"/>
    <property type="project" value="RGD"/>
</dbReference>
<dbReference type="GO" id="GO:0051233">
    <property type="term" value="C:spindle midzone"/>
    <property type="evidence" value="ECO:0000318"/>
    <property type="project" value="GO_Central"/>
</dbReference>
<dbReference type="GO" id="GO:0042802">
    <property type="term" value="F:identical protein binding"/>
    <property type="evidence" value="ECO:0000266"/>
    <property type="project" value="RGD"/>
</dbReference>
<dbReference type="GO" id="GO:0008017">
    <property type="term" value="F:microtubule binding"/>
    <property type="evidence" value="ECO:0000266"/>
    <property type="project" value="RGD"/>
</dbReference>
<dbReference type="GO" id="GO:0051010">
    <property type="term" value="F:microtubule plus-end binding"/>
    <property type="evidence" value="ECO:0000266"/>
    <property type="project" value="RGD"/>
</dbReference>
<dbReference type="GO" id="GO:0019901">
    <property type="term" value="F:protein kinase binding"/>
    <property type="evidence" value="ECO:0000266"/>
    <property type="project" value="RGD"/>
</dbReference>
<dbReference type="GO" id="GO:0043539">
    <property type="term" value="F:protein serine/threonine kinase activator activity"/>
    <property type="evidence" value="ECO:0007669"/>
    <property type="project" value="Ensembl"/>
</dbReference>
<dbReference type="GO" id="GO:0120283">
    <property type="term" value="F:protein serine/threonine kinase binding"/>
    <property type="evidence" value="ECO:0007669"/>
    <property type="project" value="Ensembl"/>
</dbReference>
<dbReference type="GO" id="GO:0048148">
    <property type="term" value="P:behavioral response to cocaine"/>
    <property type="evidence" value="ECO:0000270"/>
    <property type="project" value="RGD"/>
</dbReference>
<dbReference type="GO" id="GO:0051301">
    <property type="term" value="P:cell division"/>
    <property type="evidence" value="ECO:0007669"/>
    <property type="project" value="UniProtKB-KW"/>
</dbReference>
<dbReference type="GO" id="GO:0061003">
    <property type="term" value="P:positive regulation of dendritic spine morphogenesis"/>
    <property type="evidence" value="ECO:0000314"/>
    <property type="project" value="RGD"/>
</dbReference>
<dbReference type="GO" id="GO:0045893">
    <property type="term" value="P:positive regulation of DNA-templated transcription"/>
    <property type="evidence" value="ECO:0000266"/>
    <property type="project" value="RGD"/>
</dbReference>
<dbReference type="GO" id="GO:0035372">
    <property type="term" value="P:protein localization to microtubule"/>
    <property type="evidence" value="ECO:0000318"/>
    <property type="project" value="GO_Central"/>
</dbReference>
<dbReference type="GO" id="GO:0031113">
    <property type="term" value="P:regulation of microtubule polymerization"/>
    <property type="evidence" value="ECO:0000266"/>
    <property type="project" value="RGD"/>
</dbReference>
<dbReference type="GO" id="GO:0031110">
    <property type="term" value="P:regulation of microtubule polymerization or depolymerization"/>
    <property type="evidence" value="ECO:0000318"/>
    <property type="project" value="GO_Central"/>
</dbReference>
<dbReference type="GO" id="GO:0051225">
    <property type="term" value="P:spindle assembly"/>
    <property type="evidence" value="ECO:0000318"/>
    <property type="project" value="GO_Central"/>
</dbReference>
<dbReference type="FunFam" id="1.20.5.1430:FF:000003">
    <property type="entry name" value="microtubule-associated protein RP/EB family member 3 isoform X1"/>
    <property type="match status" value="1"/>
</dbReference>
<dbReference type="FunFam" id="1.10.418.10:FF:000007">
    <property type="entry name" value="Microtubule-associated protein, RP/EB family, member 2"/>
    <property type="match status" value="1"/>
</dbReference>
<dbReference type="Gene3D" id="1.20.5.1430">
    <property type="match status" value="1"/>
</dbReference>
<dbReference type="Gene3D" id="1.10.418.10">
    <property type="entry name" value="Calponin-like domain"/>
    <property type="match status" value="1"/>
</dbReference>
<dbReference type="InterPro" id="IPR001715">
    <property type="entry name" value="CH_dom"/>
</dbReference>
<dbReference type="InterPro" id="IPR036872">
    <property type="entry name" value="CH_dom_sf"/>
</dbReference>
<dbReference type="InterPro" id="IPR004953">
    <property type="entry name" value="EB1_C"/>
</dbReference>
<dbReference type="InterPro" id="IPR036133">
    <property type="entry name" value="EB1_C_sf"/>
</dbReference>
<dbReference type="InterPro" id="IPR027328">
    <property type="entry name" value="MAPRE"/>
</dbReference>
<dbReference type="PANTHER" id="PTHR10623">
    <property type="entry name" value="MICROTUBULE-ASSOCIATED PROTEIN RP/EB FAMILY MEMBER"/>
    <property type="match status" value="1"/>
</dbReference>
<dbReference type="Pfam" id="PF00307">
    <property type="entry name" value="CH"/>
    <property type="match status" value="1"/>
</dbReference>
<dbReference type="Pfam" id="PF03271">
    <property type="entry name" value="EB1"/>
    <property type="match status" value="1"/>
</dbReference>
<dbReference type="SUPFAM" id="SSF47576">
    <property type="entry name" value="Calponin-homology domain, CH-domain"/>
    <property type="match status" value="1"/>
</dbReference>
<dbReference type="SUPFAM" id="SSF140612">
    <property type="entry name" value="EB1 dimerisation domain-like"/>
    <property type="match status" value="1"/>
</dbReference>
<dbReference type="PROSITE" id="PS50021">
    <property type="entry name" value="CH"/>
    <property type="match status" value="1"/>
</dbReference>
<dbReference type="PROSITE" id="PS51230">
    <property type="entry name" value="EB1_C"/>
    <property type="match status" value="1"/>
</dbReference>
<comment type="function">
    <text evidence="3">Plus-end tracking protein (+TIP) that binds to the plus-end of microtubules and regulates the dynamics of the microtubule cytoskeleton. Promotes microtubule growth. May be involved in spindle function by stabilizing microtubules and anchoring them at centrosomes. Also acts as a regulator of minus-end microtubule organization: interacts with the complex formed by AKAP9 and PDE4DIP, leading to recruit CAMSAP2 to the Golgi apparatus, thereby tethering non-centrosomal minus-end microtubules to the Golgi, an important step for polarized cell movement. Promotes elongation of CAMSAP2-decorated microtubule stretches on the minus-end of microtubules (By similarity).</text>
</comment>
<comment type="subunit">
    <text evidence="3 7">Homodimer (By similarity). Heterodimer with MAPRE1 (By similarity). Binds monomeric and polymerized GTP-bound tubulin (By similarity). Interacts with DCTN1 (By similarity). Binds to the C-terminal domain of APC (By similarity). Interacts (via C-terminus) with CLIP1 (By similarity). Interacts with SLAIN2 and SLAIN1 (By similarity). Interacts with APC2 (By similarity). Interacts with SRCIN1 (PubMed:19146815). Interacts with AKAP9 (By similarity). Interacts with PDE4DIP; this interaction, which is PDE4DIP isoform-specific, is required for its recruitment to the Golgi apparatus (By similarity).</text>
</comment>
<comment type="subcellular location">
    <subcellularLocation>
        <location evidence="3">Cytoplasm</location>
        <location evidence="3">Cytoskeleton</location>
    </subcellularLocation>
    <text evidence="3">Associated with the microtubule network. Detected at the plus end of microtubules.</text>
</comment>
<comment type="domain">
    <text evidence="3">Composed of two functionally independent domains. The N-terminal domain forms a hydrophobic cleft involved in microtubule binding and the C-terminal is involved in the formation of mutually exclusive complexes with APC and DCTN1.</text>
</comment>
<comment type="similarity">
    <text evidence="8">Belongs to the MAPRE family.</text>
</comment>
<proteinExistence type="evidence at protein level"/>
<protein>
    <recommendedName>
        <fullName>Microtubule-associated protein RP/EB family member 3</fullName>
    </recommendedName>
    <alternativeName>
        <fullName>EB1 protein family member 3</fullName>
        <shortName>EBF3</shortName>
    </alternativeName>
    <alternativeName>
        <fullName>End-binding protein 3</fullName>
        <shortName>EB3</shortName>
    </alternativeName>
    <alternativeName>
        <fullName>RP3</fullName>
    </alternativeName>
</protein>
<reference key="1">
    <citation type="journal article" date="2004" name="Genome Res.">
        <title>The status, quality, and expansion of the NIH full-length cDNA project: the Mammalian Gene Collection (MGC).</title>
        <authorList>
            <consortium name="The MGC Project Team"/>
        </authorList>
    </citation>
    <scope>NUCLEOTIDE SEQUENCE [LARGE SCALE MRNA]</scope>
    <source>
        <tissue>Testis</tissue>
    </source>
</reference>
<reference key="2">
    <citation type="journal article" date="2009" name="Neuron">
        <title>Dynamic microtubules regulate dendritic spine morphology and synaptic plasticity.</title>
        <authorList>
            <person name="Jaworski J."/>
            <person name="Kapitein L.C."/>
            <person name="Gouveia S.M."/>
            <person name="Dortland B.R."/>
            <person name="Wulf P.S."/>
            <person name="Grigoriev I."/>
            <person name="Camera P."/>
            <person name="Spangler S.A."/>
            <person name="Di Stefano P."/>
            <person name="Demmers J."/>
            <person name="Krugers H."/>
            <person name="Defilippi P."/>
            <person name="Akhmanova A."/>
            <person name="Hoogenraad C.C."/>
        </authorList>
    </citation>
    <scope>INTERACTION WITH SRCIN1</scope>
</reference>
<reference key="3">
    <citation type="journal article" date="2012" name="Nat. Commun.">
        <title>Quantitative maps of protein phosphorylation sites across 14 different rat organs and tissues.</title>
        <authorList>
            <person name="Lundby A."/>
            <person name="Secher A."/>
            <person name="Lage K."/>
            <person name="Nordsborg N.B."/>
            <person name="Dmytriyev A."/>
            <person name="Lundby C."/>
            <person name="Olsen J.V."/>
        </authorList>
    </citation>
    <scope>PHOSPHORYLATION [LARGE SCALE ANALYSIS] AT SER-162</scope>
    <scope>IDENTIFICATION BY MASS SPECTROMETRY [LARGE SCALE ANALYSIS]</scope>
</reference>
<evidence type="ECO:0000250" key="1"/>
<evidence type="ECO:0000250" key="2">
    <source>
        <dbReference type="UniProtKB" id="Q6PER3"/>
    </source>
</evidence>
<evidence type="ECO:0000250" key="3">
    <source>
        <dbReference type="UniProtKB" id="Q9UPY8"/>
    </source>
</evidence>
<evidence type="ECO:0000255" key="4">
    <source>
        <dbReference type="PROSITE-ProRule" id="PRU00044"/>
    </source>
</evidence>
<evidence type="ECO:0000255" key="5">
    <source>
        <dbReference type="PROSITE-ProRule" id="PRU00576"/>
    </source>
</evidence>
<evidence type="ECO:0000256" key="6">
    <source>
        <dbReference type="SAM" id="MobiDB-lite"/>
    </source>
</evidence>
<evidence type="ECO:0000269" key="7">
    <source>
    </source>
</evidence>
<evidence type="ECO:0000305" key="8"/>
<evidence type="ECO:0007744" key="9">
    <source>
    </source>
</evidence>
<sequence length="281" mass="31966">MAVNVYSTSVTSENLSRHDMLAWVNDSLHLNYTKIEQLCSGAAYCQFMDMLFPGCVHLRKVKFQAKLEHEYIHNFKVLQAAFKKMGVDKIIPVEKLVKGKFQDNFEFIQWFKKFFDANYDGKDYNPLLARQGQDVAPPPNPGDQIFNKSKKLIGTAVPQRTSPTGPKNMQTSGRLSNVAPPCILRKNPPSARNGGHEADAQILELNQQLLDLKLTVDGLEKERDFYFSKLRDIELICQEHESENSPVISGIIGILYATEEGFAPPEDDEIEEHQQEDQDEY</sequence>
<keyword id="KW-0131">Cell cycle</keyword>
<keyword id="KW-0132">Cell division</keyword>
<keyword id="KW-0963">Cytoplasm</keyword>
<keyword id="KW-0206">Cytoskeleton</keyword>
<keyword id="KW-0493">Microtubule</keyword>
<keyword id="KW-0498">Mitosis</keyword>
<keyword id="KW-0597">Phosphoprotein</keyword>
<keyword id="KW-1185">Reference proteome</keyword>
<gene>
    <name type="primary">Mapre3</name>
</gene>